<protein>
    <recommendedName>
        <fullName>Protein Wnt-9b</fullName>
    </recommendedName>
    <alternativeName>
        <fullName>Protein Wnt-14b</fullName>
    </alternativeName>
    <alternativeName>
        <fullName>Protein Wnt-15</fullName>
    </alternativeName>
</protein>
<dbReference type="EMBL" id="AB063483">
    <property type="protein sequence ID" value="BAB70499.1"/>
    <property type="molecule type" value="mRNA"/>
</dbReference>
<dbReference type="EMBL" id="AY358217">
    <property type="protein sequence ID" value="AAQ88584.1"/>
    <property type="molecule type" value="mRNA"/>
</dbReference>
<dbReference type="EMBL" id="AC015855">
    <property type="status" value="NOT_ANNOTATED_CDS"/>
    <property type="molecule type" value="Genomic_DNA"/>
</dbReference>
<dbReference type="EMBL" id="AF028703">
    <property type="protein sequence ID" value="AAC39551.1"/>
    <property type="molecule type" value="Genomic_DNA"/>
</dbReference>
<dbReference type="CCDS" id="CCDS11506.1"/>
<dbReference type="RefSeq" id="NP_003387.1">
    <property type="nucleotide sequence ID" value="NM_003396.3"/>
</dbReference>
<dbReference type="SMR" id="O14905"/>
<dbReference type="BioGRID" id="113321">
    <property type="interactions" value="15"/>
</dbReference>
<dbReference type="FunCoup" id="O14905">
    <property type="interactions" value="701"/>
</dbReference>
<dbReference type="IntAct" id="O14905">
    <property type="interactions" value="7"/>
</dbReference>
<dbReference type="STRING" id="9606.ENSP00000290015"/>
<dbReference type="GlyCosmos" id="O14905">
    <property type="glycosylation" value="2 sites, 1 glycan"/>
</dbReference>
<dbReference type="GlyGen" id="O14905">
    <property type="glycosylation" value="2 sites, 1 O-linked glycan (1 site)"/>
</dbReference>
<dbReference type="iPTMnet" id="O14905"/>
<dbReference type="PhosphoSitePlus" id="O14905"/>
<dbReference type="BioMuta" id="WNT9B"/>
<dbReference type="MassIVE" id="O14905"/>
<dbReference type="PaxDb" id="9606-ENSP00000290015"/>
<dbReference type="PeptideAtlas" id="O14905"/>
<dbReference type="Antibodypedia" id="17705">
    <property type="antibodies" value="162 antibodies from 33 providers"/>
</dbReference>
<dbReference type="DNASU" id="7484"/>
<dbReference type="Ensembl" id="ENST00000290015.7">
    <property type="protein sequence ID" value="ENSP00000290015.2"/>
    <property type="gene ID" value="ENSG00000158955.11"/>
</dbReference>
<dbReference type="Ensembl" id="ENST00000613753.2">
    <property type="protein sequence ID" value="ENSP00000482127.1"/>
    <property type="gene ID" value="ENSG00000276799.2"/>
</dbReference>
<dbReference type="GeneID" id="7484"/>
<dbReference type="KEGG" id="hsa:7484"/>
<dbReference type="MANE-Select" id="ENST00000290015.7">
    <property type="protein sequence ID" value="ENSP00000290015.2"/>
    <property type="RefSeq nucleotide sequence ID" value="NM_003396.3"/>
    <property type="RefSeq protein sequence ID" value="NP_003387.1"/>
</dbReference>
<dbReference type="UCSC" id="uc002ikw.2">
    <property type="organism name" value="human"/>
</dbReference>
<dbReference type="AGR" id="HGNC:12779"/>
<dbReference type="CTD" id="7484"/>
<dbReference type="DisGeNET" id="7484"/>
<dbReference type="GeneCards" id="WNT9B"/>
<dbReference type="HGNC" id="HGNC:12779">
    <property type="gene designation" value="WNT9B"/>
</dbReference>
<dbReference type="HPA" id="ENSG00000158955">
    <property type="expression patterns" value="Tissue enhanced (parathyroid gland, seminal vesicle)"/>
</dbReference>
<dbReference type="MalaCards" id="WNT9B"/>
<dbReference type="MIM" id="602864">
    <property type="type" value="gene"/>
</dbReference>
<dbReference type="neXtProt" id="NX_O14905"/>
<dbReference type="OpenTargets" id="ENSG00000158955"/>
<dbReference type="Orphanet" id="1848">
    <property type="disease" value="Renal agenesis, bilateral"/>
</dbReference>
<dbReference type="PharmGKB" id="PA37380"/>
<dbReference type="VEuPathDB" id="HostDB:ENSG00000158955"/>
<dbReference type="eggNOG" id="KOG3913">
    <property type="taxonomic scope" value="Eukaryota"/>
</dbReference>
<dbReference type="GeneTree" id="ENSGT00940000158599"/>
<dbReference type="HOGENOM" id="CLU_033039_2_0_1"/>
<dbReference type="InParanoid" id="O14905"/>
<dbReference type="OMA" id="PTQGSAH"/>
<dbReference type="OrthoDB" id="5945655at2759"/>
<dbReference type="PAN-GO" id="O14905">
    <property type="GO annotations" value="6 GO annotations based on evolutionary models"/>
</dbReference>
<dbReference type="PhylomeDB" id="O14905"/>
<dbReference type="TreeFam" id="TF105310"/>
<dbReference type="PathwayCommons" id="O14905"/>
<dbReference type="Reactome" id="R-HSA-3238698">
    <property type="pathway name" value="WNT ligand biogenesis and trafficking"/>
</dbReference>
<dbReference type="Reactome" id="R-HSA-373080">
    <property type="pathway name" value="Class B/2 (Secretin family receptors)"/>
</dbReference>
<dbReference type="Reactome" id="R-HSA-9831926">
    <property type="pathway name" value="Nephron development"/>
</dbReference>
<dbReference type="SignaLink" id="O14905"/>
<dbReference type="SIGNOR" id="O14905"/>
<dbReference type="BioGRID-ORCS" id="7484">
    <property type="hits" value="12 hits in 1144 CRISPR screens"/>
</dbReference>
<dbReference type="GenomeRNAi" id="7484"/>
<dbReference type="Pharos" id="O14905">
    <property type="development level" value="Tbio"/>
</dbReference>
<dbReference type="PRO" id="PR:O14905"/>
<dbReference type="Proteomes" id="UP000005640">
    <property type="component" value="Chromosome 17"/>
</dbReference>
<dbReference type="RNAct" id="O14905">
    <property type="molecule type" value="protein"/>
</dbReference>
<dbReference type="Bgee" id="ENSG00000158955">
    <property type="expression patterns" value="Expressed in metanephros cortex and 83 other cell types or tissues"/>
</dbReference>
<dbReference type="ExpressionAtlas" id="O14905">
    <property type="expression patterns" value="baseline and differential"/>
</dbReference>
<dbReference type="GO" id="GO:0005576">
    <property type="term" value="C:extracellular region"/>
    <property type="evidence" value="ECO:0000304"/>
    <property type="project" value="Reactome"/>
</dbReference>
<dbReference type="GO" id="GO:0005615">
    <property type="term" value="C:extracellular space"/>
    <property type="evidence" value="ECO:0000318"/>
    <property type="project" value="GO_Central"/>
</dbReference>
<dbReference type="GO" id="GO:0039706">
    <property type="term" value="F:co-receptor binding"/>
    <property type="evidence" value="ECO:0007669"/>
    <property type="project" value="Ensembl"/>
</dbReference>
<dbReference type="GO" id="GO:0005125">
    <property type="term" value="F:cytokine activity"/>
    <property type="evidence" value="ECO:0000318"/>
    <property type="project" value="GO_Central"/>
</dbReference>
<dbReference type="GO" id="GO:0005109">
    <property type="term" value="F:frizzled binding"/>
    <property type="evidence" value="ECO:0000318"/>
    <property type="project" value="GO_Central"/>
</dbReference>
<dbReference type="GO" id="GO:0048018">
    <property type="term" value="F:receptor ligand activity"/>
    <property type="evidence" value="ECO:0000314"/>
    <property type="project" value="WormBase"/>
</dbReference>
<dbReference type="GO" id="GO:0001658">
    <property type="term" value="P:branching involved in ureteric bud morphogenesis"/>
    <property type="evidence" value="ECO:0007669"/>
    <property type="project" value="Ensembl"/>
</dbReference>
<dbReference type="GO" id="GO:0060070">
    <property type="term" value="P:canonical Wnt signaling pathway"/>
    <property type="evidence" value="ECO:0000314"/>
    <property type="project" value="WormBase"/>
</dbReference>
<dbReference type="GO" id="GO:0045165">
    <property type="term" value="P:cell fate commitment"/>
    <property type="evidence" value="ECO:0000318"/>
    <property type="project" value="GO_Central"/>
</dbReference>
<dbReference type="GO" id="GO:0071300">
    <property type="term" value="P:cellular response to retinoic acid"/>
    <property type="evidence" value="ECO:0000250"/>
    <property type="project" value="UniProtKB"/>
</dbReference>
<dbReference type="GO" id="GO:0009267">
    <property type="term" value="P:cellular response to starvation"/>
    <property type="evidence" value="ECO:0007669"/>
    <property type="project" value="Ensembl"/>
</dbReference>
<dbReference type="GO" id="GO:0072044">
    <property type="term" value="P:collecting duct development"/>
    <property type="evidence" value="ECO:0007669"/>
    <property type="project" value="Ensembl"/>
</dbReference>
<dbReference type="GO" id="GO:0061303">
    <property type="term" value="P:cornea development in camera-type eye"/>
    <property type="evidence" value="ECO:0000250"/>
    <property type="project" value="BHF-UCL"/>
</dbReference>
<dbReference type="GO" id="GO:0048701">
    <property type="term" value="P:embryonic cranial skeleton morphogenesis"/>
    <property type="evidence" value="ECO:0007669"/>
    <property type="project" value="Ensembl"/>
</dbReference>
<dbReference type="GO" id="GO:0072046">
    <property type="term" value="P:establishment of planar polarity involved in nephron morphogenesis"/>
    <property type="evidence" value="ECO:0007669"/>
    <property type="project" value="Ensembl"/>
</dbReference>
<dbReference type="GO" id="GO:0001701">
    <property type="term" value="P:in utero embryonic development"/>
    <property type="evidence" value="ECO:0007669"/>
    <property type="project" value="Ensembl"/>
</dbReference>
<dbReference type="GO" id="GO:0072003">
    <property type="term" value="P:kidney rudiment formation"/>
    <property type="evidence" value="ECO:0007669"/>
    <property type="project" value="Ensembl"/>
</dbReference>
<dbReference type="GO" id="GO:0030539">
    <property type="term" value="P:male genitalia development"/>
    <property type="evidence" value="ECO:0007669"/>
    <property type="project" value="Ensembl"/>
</dbReference>
<dbReference type="GO" id="GO:0072038">
    <property type="term" value="P:mesenchymal stem cell maintenance involved in nephron morphogenesis"/>
    <property type="evidence" value="ECO:0007669"/>
    <property type="project" value="Ensembl"/>
</dbReference>
<dbReference type="GO" id="GO:0072181">
    <property type="term" value="P:mesonephric duct formation"/>
    <property type="evidence" value="ECO:0007669"/>
    <property type="project" value="Ensembl"/>
</dbReference>
<dbReference type="GO" id="GO:0072174">
    <property type="term" value="P:metanephric tubule formation"/>
    <property type="evidence" value="ECO:0007669"/>
    <property type="project" value="Ensembl"/>
</dbReference>
<dbReference type="GO" id="GO:1904948">
    <property type="term" value="P:midbrain dopaminergic neuron differentiation"/>
    <property type="evidence" value="ECO:0000315"/>
    <property type="project" value="ParkinsonsUK-UCL"/>
</dbReference>
<dbReference type="GO" id="GO:1902455">
    <property type="term" value="P:negative regulation of stem cell population maintenance"/>
    <property type="evidence" value="ECO:0000315"/>
    <property type="project" value="ParkinsonsUK-UCL"/>
</dbReference>
<dbReference type="GO" id="GO:0030182">
    <property type="term" value="P:neuron differentiation"/>
    <property type="evidence" value="ECO:0000250"/>
    <property type="project" value="UniProtKB"/>
</dbReference>
<dbReference type="GO" id="GO:0035567">
    <property type="term" value="P:non-canonical Wnt signaling pathway"/>
    <property type="evidence" value="ECO:0000314"/>
    <property type="project" value="ParkinsonsUK-UCL"/>
</dbReference>
<dbReference type="GO" id="GO:0009786">
    <property type="term" value="P:regulation of asymmetric cell division"/>
    <property type="evidence" value="ECO:0007669"/>
    <property type="project" value="Ensembl"/>
</dbReference>
<dbReference type="GO" id="GO:0003339">
    <property type="term" value="P:regulation of mesenchymal to epithelial transition involved in metanephros morphogenesis"/>
    <property type="evidence" value="ECO:0007669"/>
    <property type="project" value="Ensembl"/>
</dbReference>
<dbReference type="GO" id="GO:0035150">
    <property type="term" value="P:regulation of tube size"/>
    <property type="evidence" value="ECO:0007669"/>
    <property type="project" value="Ensembl"/>
</dbReference>
<dbReference type="GO" id="GO:0032526">
    <property type="term" value="P:response to retinoic acid"/>
    <property type="evidence" value="ECO:0000303"/>
    <property type="project" value="BHF-UCL"/>
</dbReference>
<dbReference type="GO" id="GO:0060021">
    <property type="term" value="P:roof of mouth development"/>
    <property type="evidence" value="ECO:0007669"/>
    <property type="project" value="Ensembl"/>
</dbReference>
<dbReference type="GO" id="GO:0061038">
    <property type="term" value="P:uterus morphogenesis"/>
    <property type="evidence" value="ECO:0007669"/>
    <property type="project" value="Ensembl"/>
</dbReference>
<dbReference type="GO" id="GO:0060071">
    <property type="term" value="P:Wnt signaling pathway, planar cell polarity pathway"/>
    <property type="evidence" value="ECO:0007669"/>
    <property type="project" value="Ensembl"/>
</dbReference>
<dbReference type="CDD" id="cd19354">
    <property type="entry name" value="Wnt_Wnt9b"/>
    <property type="match status" value="1"/>
</dbReference>
<dbReference type="FunFam" id="3.30.2460.20:FF:000002">
    <property type="entry name" value="Protein Wnt"/>
    <property type="match status" value="1"/>
</dbReference>
<dbReference type="Gene3D" id="3.30.2460.20">
    <property type="match status" value="1"/>
</dbReference>
<dbReference type="InterPro" id="IPR005817">
    <property type="entry name" value="Wnt"/>
</dbReference>
<dbReference type="InterPro" id="IPR043158">
    <property type="entry name" value="Wnt_C"/>
</dbReference>
<dbReference type="InterPro" id="IPR018161">
    <property type="entry name" value="Wnt_CS"/>
</dbReference>
<dbReference type="PANTHER" id="PTHR12027:SF84">
    <property type="entry name" value="PROTEIN WNT-9B"/>
    <property type="match status" value="1"/>
</dbReference>
<dbReference type="PANTHER" id="PTHR12027">
    <property type="entry name" value="WNT RELATED"/>
    <property type="match status" value="1"/>
</dbReference>
<dbReference type="Pfam" id="PF00110">
    <property type="entry name" value="wnt"/>
    <property type="match status" value="1"/>
</dbReference>
<dbReference type="PRINTS" id="PR01349">
    <property type="entry name" value="WNTPROTEIN"/>
</dbReference>
<dbReference type="SMART" id="SM00097">
    <property type="entry name" value="WNT1"/>
    <property type="match status" value="1"/>
</dbReference>
<dbReference type="PROSITE" id="PS00246">
    <property type="entry name" value="WNT1"/>
    <property type="match status" value="1"/>
</dbReference>
<keyword id="KW-0217">Developmental protein</keyword>
<keyword id="KW-1015">Disulfide bond</keyword>
<keyword id="KW-0272">Extracellular matrix</keyword>
<keyword id="KW-0325">Glycoprotein</keyword>
<keyword id="KW-0449">Lipoprotein</keyword>
<keyword id="KW-1267">Proteomics identification</keyword>
<keyword id="KW-1185">Reference proteome</keyword>
<keyword id="KW-0964">Secreted</keyword>
<keyword id="KW-0732">Signal</keyword>
<keyword id="KW-0879">Wnt signaling pathway</keyword>
<reference key="1">
    <citation type="journal article" date="2001" name="Int. J. Oncol.">
        <title>Molecular cloning and characterization of WNT14B, a novel member of the WNT gene family.</title>
        <authorList>
            <person name="Kirikoshi H."/>
            <person name="Sekihara H."/>
            <person name="Katoh M."/>
        </authorList>
    </citation>
    <scope>NUCLEOTIDE SEQUENCE [MRNA]</scope>
    <scope>VARIANT THR-106</scope>
</reference>
<reference key="2">
    <citation type="journal article" date="2003" name="Genome Res.">
        <title>The secreted protein discovery initiative (SPDI), a large-scale effort to identify novel human secreted and transmembrane proteins: a bioinformatics assessment.</title>
        <authorList>
            <person name="Clark H.F."/>
            <person name="Gurney A.L."/>
            <person name="Abaya E."/>
            <person name="Baker K."/>
            <person name="Baldwin D.T."/>
            <person name="Brush J."/>
            <person name="Chen J."/>
            <person name="Chow B."/>
            <person name="Chui C."/>
            <person name="Crowley C."/>
            <person name="Currell B."/>
            <person name="Deuel B."/>
            <person name="Dowd P."/>
            <person name="Eaton D."/>
            <person name="Foster J.S."/>
            <person name="Grimaldi C."/>
            <person name="Gu Q."/>
            <person name="Hass P.E."/>
            <person name="Heldens S."/>
            <person name="Huang A."/>
            <person name="Kim H.S."/>
            <person name="Klimowski L."/>
            <person name="Jin Y."/>
            <person name="Johnson S."/>
            <person name="Lee J."/>
            <person name="Lewis L."/>
            <person name="Liao D."/>
            <person name="Mark M.R."/>
            <person name="Robbie E."/>
            <person name="Sanchez C."/>
            <person name="Schoenfeld J."/>
            <person name="Seshagiri S."/>
            <person name="Simmons L."/>
            <person name="Singh J."/>
            <person name="Smith V."/>
            <person name="Stinson J."/>
            <person name="Vagts A."/>
            <person name="Vandlen R.L."/>
            <person name="Watanabe C."/>
            <person name="Wieand D."/>
            <person name="Woods K."/>
            <person name="Xie M.-H."/>
            <person name="Yansura D.G."/>
            <person name="Yi S."/>
            <person name="Yu G."/>
            <person name="Yuan J."/>
            <person name="Zhang M."/>
            <person name="Zhang Z."/>
            <person name="Goddard A.D."/>
            <person name="Wood W.I."/>
            <person name="Godowski P.J."/>
            <person name="Gray A.M."/>
        </authorList>
    </citation>
    <scope>NUCLEOTIDE SEQUENCE [LARGE SCALE MRNA]</scope>
</reference>
<reference key="3">
    <citation type="journal article" date="2006" name="Nature">
        <title>DNA sequence of human chromosome 17 and analysis of rearrangement in the human lineage.</title>
        <authorList>
            <person name="Zody M.C."/>
            <person name="Garber M."/>
            <person name="Adams D.J."/>
            <person name="Sharpe T."/>
            <person name="Harrow J."/>
            <person name="Lupski J.R."/>
            <person name="Nicholson C."/>
            <person name="Searle S.M."/>
            <person name="Wilming L."/>
            <person name="Young S.K."/>
            <person name="Abouelleil A."/>
            <person name="Allen N.R."/>
            <person name="Bi W."/>
            <person name="Bloom T."/>
            <person name="Borowsky M.L."/>
            <person name="Bugalter B.E."/>
            <person name="Butler J."/>
            <person name="Chang J.L."/>
            <person name="Chen C.-K."/>
            <person name="Cook A."/>
            <person name="Corum B."/>
            <person name="Cuomo C.A."/>
            <person name="de Jong P.J."/>
            <person name="DeCaprio D."/>
            <person name="Dewar K."/>
            <person name="FitzGerald M."/>
            <person name="Gilbert J."/>
            <person name="Gibson R."/>
            <person name="Gnerre S."/>
            <person name="Goldstein S."/>
            <person name="Grafham D.V."/>
            <person name="Grocock R."/>
            <person name="Hafez N."/>
            <person name="Hagopian D.S."/>
            <person name="Hart E."/>
            <person name="Norman C.H."/>
            <person name="Humphray S."/>
            <person name="Jaffe D.B."/>
            <person name="Jones M."/>
            <person name="Kamal M."/>
            <person name="Khodiyar V.K."/>
            <person name="LaButti K."/>
            <person name="Laird G."/>
            <person name="Lehoczky J."/>
            <person name="Liu X."/>
            <person name="Lokyitsang T."/>
            <person name="Loveland J."/>
            <person name="Lui A."/>
            <person name="Macdonald P."/>
            <person name="Major J.E."/>
            <person name="Matthews L."/>
            <person name="Mauceli E."/>
            <person name="McCarroll S.A."/>
            <person name="Mihalev A.H."/>
            <person name="Mudge J."/>
            <person name="Nguyen C."/>
            <person name="Nicol R."/>
            <person name="O'Leary S.B."/>
            <person name="Osoegawa K."/>
            <person name="Schwartz D.C."/>
            <person name="Shaw-Smith C."/>
            <person name="Stankiewicz P."/>
            <person name="Steward C."/>
            <person name="Swarbreck D."/>
            <person name="Venkataraman V."/>
            <person name="Whittaker C.A."/>
            <person name="Yang X."/>
            <person name="Zimmer A.R."/>
            <person name="Bradley A."/>
            <person name="Hubbard T."/>
            <person name="Birren B.W."/>
            <person name="Rogers J."/>
            <person name="Lander E.S."/>
            <person name="Nusbaum C."/>
        </authorList>
    </citation>
    <scope>NUCLEOTIDE SEQUENCE [LARGE SCALE GENOMIC DNA]</scope>
</reference>
<reference key="4">
    <citation type="journal article" date="1997" name="Genomics">
        <title>Isolation of two novel WNT genes, WNT14 and WNT15, one of which (WNT15) is closely linked to WNT3 on human chromosome 17q21.</title>
        <authorList>
            <person name="Bergstein I."/>
            <person name="Eisenberg L.M."/>
            <person name="Bhalerao J."/>
            <person name="Jenkins N.A."/>
            <person name="Copeland N.G."/>
            <person name="Osborne M.P."/>
            <person name="Bowcock A.M."/>
            <person name="Brown A.M.C."/>
        </authorList>
    </citation>
    <scope>NUCLEOTIDE SEQUENCE [GENOMIC DNA] OF 216-335</scope>
</reference>
<reference key="5">
    <citation type="journal article" date="2010" name="J. Biol. Chem.">
        <title>Reconstitution of a frizzled8.Wnt3a.LRP6 signaling complex reveals multiple Wnt and Dkk1 binding sites on LRP6.</title>
        <authorList>
            <person name="Bourhis E."/>
            <person name="Tam C."/>
            <person name="Franke Y."/>
            <person name="Bazan J.F."/>
            <person name="Ernst J."/>
            <person name="Hwang J."/>
            <person name="Costa M."/>
            <person name="Cochran A.G."/>
            <person name="Hannoush R.N."/>
        </authorList>
    </citation>
    <scope>INTERACTION WITH LRP6 IN THE WNT/FZD/LRP6 COMPLEX</scope>
    <scope>FUNCTION</scope>
</reference>
<reference key="6">
    <citation type="journal article" date="2016" name="Elife">
        <title>Active and water-soluble form of lipidated Wnt protein is maintained by a serum glycoprotein afamin/alpha-albumin.</title>
        <authorList>
            <person name="Mihara E."/>
            <person name="Hirai H."/>
            <person name="Yamamoto H."/>
            <person name="Tamura-Kawakami K."/>
            <person name="Matano M."/>
            <person name="Kikuchi A."/>
            <person name="Sato T."/>
            <person name="Takagi J."/>
        </authorList>
    </citation>
    <scope>INTERACTION WITH AFM</scope>
    <scope>SUBCELLULAR LOCATION</scope>
</reference>
<reference key="7">
    <citation type="journal article" date="2016" name="Nat. Cell Biol.">
        <title>The polycystin complex mediates Wnt/Ca(2+) signalling.</title>
        <authorList>
            <person name="Kim S."/>
            <person name="Nie H."/>
            <person name="Nesin V."/>
            <person name="Tran U."/>
            <person name="Outeda P."/>
            <person name="Bai C.X."/>
            <person name="Keeling J."/>
            <person name="Maskey D."/>
            <person name="Watnick T."/>
            <person name="Wessely O."/>
            <person name="Tsiokas L."/>
        </authorList>
    </citation>
    <scope>INTERACTION WITH PKD1</scope>
</reference>
<proteinExistence type="evidence at protein level"/>
<comment type="function">
    <text evidence="1 12">Ligand for members of the frizzled family of seven transmembrane receptors (Probable). Functions in the canonical Wnt/beta-catenin signaling pathway. Required for normal embryonic kidney development, and for normal development of the urogenital tract, including uterus and part of the oviduct and the upper vagina in females, and epididymis and vas deferens in males. Activates a signaling cascade in the metanephric mesenchyme that induces tubulogenesis. Acts upstream of WNT4 in the signaling pathways that mediate development of kidney tubules and the Muellerian ducts. Plays a role in cranofacial development and is required for normal fusion of the palate during embryonic development (By similarity).</text>
</comment>
<comment type="subunit">
    <text evidence="7 8 9">Forms a soluble 1:1 complex with AFM; this prevents oligomerization and is required for prolonged biological activity (PubMed:26902720). The complex with AFM may represent the physiological form in body fluids (PubMed:26902720). Component of the Wnt-Fzd-LRP5-LRP6 signaling complex that contains a WNT protein, a FZD protein and LRP5 or LRP6. Interacts directly in the complex with LRP6 (PubMed:20093360). Interacts with PKD1 (via extracellular domain) (PubMed:27214281).</text>
</comment>
<comment type="subcellular location">
    <subcellularLocation>
        <location evidence="11">Secreted</location>
        <location evidence="11">Extracellular space</location>
        <location evidence="11">Extracellular matrix</location>
    </subcellularLocation>
    <subcellularLocation>
        <location evidence="8">Secreted</location>
    </subcellularLocation>
</comment>
<comment type="tissue specificity">
    <text>Moderately expressed in fetal kidney and adult kidney. Also found in brain.</text>
</comment>
<comment type="PTM">
    <text evidence="2 4">Palmitoleoylation is required for efficient binding to frizzled receptors. Depalmitoleoylation leads to Wnt signaling pathway inhibition.</text>
</comment>
<comment type="similarity">
    <text evidence="11">Belongs to the Wnt family.</text>
</comment>
<sequence length="357" mass="39001">MRPPPALALAGLCLLALPAAAASYFGLTGREVLTPFPGLGTAAAPAQGGAHLKQCDLLKLSRRQKQLCRREPGLAETLRDAAHLGLLECQFQFRHERWNCSLEGRMGLLKRGFKETAFLYAVSSAALTHTLARACSAGRMERCTCDDSPGLESRQAWQWGVCGDNLKYSTKFLSNFLGSKRGNKDLRARADAHNTHVGIKAVKSGLRTTCKCHGVSGSCAVRTCWKQLSPFRETGQVLKLRYDSAVKVSSATNEALGRLELWAPARQGSLTKGLAPRSGDLVYMEDSPSFCRPSKYSPGTAGRVCSREASCSSLCCGRGYDTQSRLVAFSCHCQVQWCCYVECQQCVQEELVYTCKH</sequence>
<name>WNT9B_HUMAN</name>
<evidence type="ECO:0000250" key="1">
    <source>
        <dbReference type="UniProtKB" id="O35468"/>
    </source>
</evidence>
<evidence type="ECO:0000250" key="2">
    <source>
        <dbReference type="UniProtKB" id="P27467"/>
    </source>
</evidence>
<evidence type="ECO:0000250" key="3">
    <source>
        <dbReference type="UniProtKB" id="P28026"/>
    </source>
</evidence>
<evidence type="ECO:0000250" key="4">
    <source>
        <dbReference type="UniProtKB" id="P56704"/>
    </source>
</evidence>
<evidence type="ECO:0000255" key="5"/>
<evidence type="ECO:0000269" key="6">
    <source>
    </source>
</evidence>
<evidence type="ECO:0000269" key="7">
    <source>
    </source>
</evidence>
<evidence type="ECO:0000269" key="8">
    <source>
    </source>
</evidence>
<evidence type="ECO:0000269" key="9">
    <source>
    </source>
</evidence>
<evidence type="ECO:0000303" key="10">
    <source>
    </source>
</evidence>
<evidence type="ECO:0000305" key="11"/>
<evidence type="ECO:0000305" key="12">
    <source>
    </source>
</evidence>
<gene>
    <name type="primary">WNT9B</name>
    <name evidence="10" type="synonym">WNT14B</name>
    <name type="synonym">WNT15</name>
    <name type="ORF">UNQ6973/PRO21956</name>
</gene>
<organism>
    <name type="scientific">Homo sapiens</name>
    <name type="common">Human</name>
    <dbReference type="NCBI Taxonomy" id="9606"/>
    <lineage>
        <taxon>Eukaryota</taxon>
        <taxon>Metazoa</taxon>
        <taxon>Chordata</taxon>
        <taxon>Craniata</taxon>
        <taxon>Vertebrata</taxon>
        <taxon>Euteleostomi</taxon>
        <taxon>Mammalia</taxon>
        <taxon>Eutheria</taxon>
        <taxon>Euarchontoglires</taxon>
        <taxon>Primates</taxon>
        <taxon>Haplorrhini</taxon>
        <taxon>Catarrhini</taxon>
        <taxon>Hominidae</taxon>
        <taxon>Homo</taxon>
    </lineage>
</organism>
<accession>O14905</accession>
<accession>Q6UXT4</accession>
<accession>Q96Q09</accession>
<feature type="signal peptide" evidence="5">
    <location>
        <begin position="1"/>
        <end position="22"/>
    </location>
</feature>
<feature type="chain" id="PRO_0000041458" description="Protein Wnt-9b">
    <location>
        <begin position="23"/>
        <end position="357"/>
    </location>
</feature>
<feature type="lipid moiety-binding region" description="O-palmitoleoyl serine; by PORCN" evidence="4">
    <location>
        <position position="216"/>
    </location>
</feature>
<feature type="glycosylation site" description="N-linked (GlcNAc...) asparagine" evidence="5">
    <location>
        <position position="99"/>
    </location>
</feature>
<feature type="disulfide bond" evidence="3">
    <location>
        <begin position="89"/>
        <end position="100"/>
    </location>
</feature>
<feature type="disulfide bond" evidence="3">
    <location>
        <begin position="135"/>
        <end position="143"/>
    </location>
</feature>
<feature type="disulfide bond" evidence="3">
    <location>
        <begin position="145"/>
        <end position="162"/>
    </location>
</feature>
<feature type="disulfide bond" evidence="3">
    <location>
        <begin position="210"/>
        <end position="224"/>
    </location>
</feature>
<feature type="disulfide bond" evidence="3">
    <location>
        <begin position="212"/>
        <end position="219"/>
    </location>
</feature>
<feature type="disulfide bond" evidence="3">
    <location>
        <begin position="291"/>
        <end position="316"/>
    </location>
</feature>
<feature type="disulfide bond" evidence="3">
    <location>
        <begin position="305"/>
        <end position="311"/>
    </location>
</feature>
<feature type="disulfide bond" evidence="3">
    <location>
        <begin position="315"/>
        <end position="355"/>
    </location>
</feature>
<feature type="disulfide bond" evidence="3">
    <location>
        <begin position="331"/>
        <end position="346"/>
    </location>
</feature>
<feature type="disulfide bond" evidence="3">
    <location>
        <begin position="333"/>
        <end position="343"/>
    </location>
</feature>
<feature type="disulfide bond" evidence="3">
    <location>
        <begin position="338"/>
        <end position="339"/>
    </location>
</feature>
<feature type="sequence variant" id="VAR_030839" description="In dbSNP:rs4968281." evidence="6">
    <original>M</original>
    <variation>T</variation>
    <location>
        <position position="106"/>
    </location>
</feature>